<gene>
    <name evidence="1" type="primary">mgrB</name>
    <name type="ordered locus">SbBS512_E2093</name>
</gene>
<name>MGRB_SHIB3</name>
<feature type="chain" id="PRO_1000201577" description="PhoP/PhoQ regulator MgrB">
    <location>
        <begin position="1"/>
        <end position="47"/>
    </location>
</feature>
<feature type="transmembrane region" description="Helical" evidence="1">
    <location>
        <begin position="6"/>
        <end position="26"/>
    </location>
</feature>
<sequence length="47" mass="5552">MKKFRWVVLVVVVLACLLLWAQVFNMMCDQDVQFFSGICAINQFIPW</sequence>
<proteinExistence type="inferred from homology"/>
<evidence type="ECO:0000255" key="1">
    <source>
        <dbReference type="HAMAP-Rule" id="MF_01596"/>
    </source>
</evidence>
<reference key="1">
    <citation type="submission" date="2008-05" db="EMBL/GenBank/DDBJ databases">
        <title>Complete sequence of Shigella boydii serotype 18 strain BS512.</title>
        <authorList>
            <person name="Rasko D.A."/>
            <person name="Rosovitz M."/>
            <person name="Maurelli A.T."/>
            <person name="Myers G."/>
            <person name="Seshadri R."/>
            <person name="Cer R."/>
            <person name="Jiang L."/>
            <person name="Ravel J."/>
            <person name="Sebastian Y."/>
        </authorList>
    </citation>
    <scope>NUCLEOTIDE SEQUENCE [LARGE SCALE GENOMIC DNA]</scope>
    <source>
        <strain>CDC 3083-94 / BS512</strain>
    </source>
</reference>
<keyword id="KW-0997">Cell inner membrane</keyword>
<keyword id="KW-1003">Cell membrane</keyword>
<keyword id="KW-0472">Membrane</keyword>
<keyword id="KW-1185">Reference proteome</keyword>
<keyword id="KW-0812">Transmembrane</keyword>
<keyword id="KW-1133">Transmembrane helix</keyword>
<accession>B2U467</accession>
<dbReference type="EMBL" id="CP001063">
    <property type="protein sequence ID" value="ACD06882.1"/>
    <property type="molecule type" value="Genomic_DNA"/>
</dbReference>
<dbReference type="RefSeq" id="WP_000714550.1">
    <property type="nucleotide sequence ID" value="NC_010658.1"/>
</dbReference>
<dbReference type="SMR" id="B2U467"/>
<dbReference type="STRING" id="344609.SbBS512_E2093"/>
<dbReference type="GeneID" id="93776075"/>
<dbReference type="KEGG" id="sbc:SbBS512_E2093"/>
<dbReference type="HOGENOM" id="CLU_208030_1_0_6"/>
<dbReference type="Proteomes" id="UP000001030">
    <property type="component" value="Chromosome"/>
</dbReference>
<dbReference type="GO" id="GO:0005886">
    <property type="term" value="C:plasma membrane"/>
    <property type="evidence" value="ECO:0007669"/>
    <property type="project" value="UniProtKB-SubCell"/>
</dbReference>
<dbReference type="GO" id="GO:0070298">
    <property type="term" value="P:negative regulation of phosphorelay signal transduction system"/>
    <property type="evidence" value="ECO:0007669"/>
    <property type="project" value="UniProtKB-UniRule"/>
</dbReference>
<dbReference type="HAMAP" id="MF_01596">
    <property type="entry name" value="MgrB"/>
    <property type="match status" value="1"/>
</dbReference>
<dbReference type="InterPro" id="IPR020907">
    <property type="entry name" value="MgrB"/>
</dbReference>
<dbReference type="NCBIfam" id="NF007635">
    <property type="entry name" value="PRK10299.1"/>
    <property type="match status" value="1"/>
</dbReference>
<dbReference type="Pfam" id="PF13998">
    <property type="entry name" value="MgrB"/>
    <property type="match status" value="1"/>
</dbReference>
<dbReference type="PROSITE" id="PS51257">
    <property type="entry name" value="PROKAR_LIPOPROTEIN"/>
    <property type="match status" value="1"/>
</dbReference>
<organism>
    <name type="scientific">Shigella boydii serotype 18 (strain CDC 3083-94 / BS512)</name>
    <dbReference type="NCBI Taxonomy" id="344609"/>
    <lineage>
        <taxon>Bacteria</taxon>
        <taxon>Pseudomonadati</taxon>
        <taxon>Pseudomonadota</taxon>
        <taxon>Gammaproteobacteria</taxon>
        <taxon>Enterobacterales</taxon>
        <taxon>Enterobacteriaceae</taxon>
        <taxon>Shigella</taxon>
    </lineage>
</organism>
<comment type="function">
    <text evidence="1">PhoP-regulated transcription is redox-sensitive, being activated when the periplasm becomes more reducing. MgrB acts between DsbA/DsbB and PhoP/PhoQ in this pathway. Represses PhoP/PhoQ signaling, possibly by binding to the periplasmic domain of PhoQ, altering its activity and that of downstream effector PhoP.</text>
</comment>
<comment type="subunit">
    <text evidence="1">May form homooligomers. Probably interacts with the periplasmic domain of PhoQ.</text>
</comment>
<comment type="subcellular location">
    <subcellularLocation>
        <location evidence="1">Cell inner membrane</location>
        <topology evidence="1">Single-pass membrane protein</topology>
    </subcellularLocation>
</comment>
<comment type="similarity">
    <text evidence="1">Belongs to the MgrB family.</text>
</comment>
<protein>
    <recommendedName>
        <fullName evidence="1">PhoP/PhoQ regulator MgrB</fullName>
    </recommendedName>
</protein>